<keyword id="KW-0963">Cytoplasm</keyword>
<keyword id="KW-0903">Direct protein sequencing</keyword>
<keyword id="KW-0539">Nucleus</keyword>
<keyword id="KW-0653">Protein transport</keyword>
<keyword id="KW-1185">Reference proteome</keyword>
<keyword id="KW-0677">Repeat</keyword>
<keyword id="KW-0813">Transport</keyword>
<evidence type="ECO:0000250" key="1">
    <source>
        <dbReference type="UniProtKB" id="P52293"/>
    </source>
</evidence>
<evidence type="ECO:0000250" key="2">
    <source>
        <dbReference type="UniProtKB" id="P52294"/>
    </source>
</evidence>
<evidence type="ECO:0000255" key="3">
    <source>
        <dbReference type="PROSITE-ProRule" id="PRU00561"/>
    </source>
</evidence>
<evidence type="ECO:0000256" key="4">
    <source>
        <dbReference type="SAM" id="MobiDB-lite"/>
    </source>
</evidence>
<evidence type="ECO:0000269" key="5">
    <source>
    </source>
</evidence>
<evidence type="ECO:0000269" key="6">
    <source>
    </source>
</evidence>
<evidence type="ECO:0000305" key="7"/>
<dbReference type="EMBL" id="L36339">
    <property type="protein sequence ID" value="AAC14195.1"/>
    <property type="molecule type" value="mRNA"/>
</dbReference>
<dbReference type="PIR" id="A55194">
    <property type="entry name" value="A55194"/>
</dbReference>
<dbReference type="PIR" id="B55194">
    <property type="entry name" value="B55194"/>
</dbReference>
<dbReference type="RefSeq" id="XP_018092812.1">
    <property type="nucleotide sequence ID" value="XM_018237323.1"/>
</dbReference>
<dbReference type="RefSeq" id="XP_018092813.1">
    <property type="nucleotide sequence ID" value="XM_018237324.1"/>
</dbReference>
<dbReference type="SMR" id="P52170"/>
<dbReference type="IntAct" id="P52170">
    <property type="interactions" value="1"/>
</dbReference>
<dbReference type="MINT" id="P52170"/>
<dbReference type="DNASU" id="398026"/>
<dbReference type="GeneID" id="398026"/>
<dbReference type="AGR" id="Xenbase:XB-GENE-5991815"/>
<dbReference type="CTD" id="398026"/>
<dbReference type="Xenbase" id="XB-GENE-5991815">
    <property type="gene designation" value="kpna7.S"/>
</dbReference>
<dbReference type="OMA" id="CWVINNI"/>
<dbReference type="OrthoDB" id="29145at2759"/>
<dbReference type="Proteomes" id="UP000186698">
    <property type="component" value="Chromosome 9_10S"/>
</dbReference>
<dbReference type="Bgee" id="398026">
    <property type="expression patterns" value="Expressed in ovary and 7 other cell types or tissues"/>
</dbReference>
<dbReference type="GO" id="GO:0005737">
    <property type="term" value="C:cytoplasm"/>
    <property type="evidence" value="ECO:0007669"/>
    <property type="project" value="UniProtKB-SubCell"/>
</dbReference>
<dbReference type="GO" id="GO:0005634">
    <property type="term" value="C:nucleus"/>
    <property type="evidence" value="ECO:0000318"/>
    <property type="project" value="GO_Central"/>
</dbReference>
<dbReference type="GO" id="GO:0061608">
    <property type="term" value="F:nuclear import signal receptor activity"/>
    <property type="evidence" value="ECO:0000318"/>
    <property type="project" value="GO_Central"/>
</dbReference>
<dbReference type="GO" id="GO:0008139">
    <property type="term" value="F:nuclear localization sequence binding"/>
    <property type="evidence" value="ECO:0000318"/>
    <property type="project" value="GO_Central"/>
</dbReference>
<dbReference type="GO" id="GO:0006607">
    <property type="term" value="P:NLS-bearing protein import into nucleus"/>
    <property type="evidence" value="ECO:0000318"/>
    <property type="project" value="GO_Central"/>
</dbReference>
<dbReference type="FunFam" id="1.25.10.10:FF:000009">
    <property type="entry name" value="Importin subunit alpha"/>
    <property type="match status" value="1"/>
</dbReference>
<dbReference type="Gene3D" id="1.20.5.690">
    <property type="entry name" value="Importin-alpha, importin-beta-binding domain"/>
    <property type="match status" value="1"/>
</dbReference>
<dbReference type="Gene3D" id="1.25.10.10">
    <property type="entry name" value="Leucine-rich Repeat Variant"/>
    <property type="match status" value="1"/>
</dbReference>
<dbReference type="InterPro" id="IPR011989">
    <property type="entry name" value="ARM-like"/>
</dbReference>
<dbReference type="InterPro" id="IPR016024">
    <property type="entry name" value="ARM-type_fold"/>
</dbReference>
<dbReference type="InterPro" id="IPR032413">
    <property type="entry name" value="Arm_3"/>
</dbReference>
<dbReference type="InterPro" id="IPR000225">
    <property type="entry name" value="Armadillo"/>
</dbReference>
<dbReference type="InterPro" id="IPR002652">
    <property type="entry name" value="Importin-a_IBB"/>
</dbReference>
<dbReference type="InterPro" id="IPR036975">
    <property type="entry name" value="Importin-a_IBB_sf"/>
</dbReference>
<dbReference type="InterPro" id="IPR024931">
    <property type="entry name" value="Importin_alpha"/>
</dbReference>
<dbReference type="PANTHER" id="PTHR23316">
    <property type="entry name" value="IMPORTIN ALPHA"/>
    <property type="match status" value="1"/>
</dbReference>
<dbReference type="Pfam" id="PF00514">
    <property type="entry name" value="Arm"/>
    <property type="match status" value="8"/>
</dbReference>
<dbReference type="Pfam" id="PF16186">
    <property type="entry name" value="Arm_3"/>
    <property type="match status" value="1"/>
</dbReference>
<dbReference type="Pfam" id="PF01749">
    <property type="entry name" value="IBB"/>
    <property type="match status" value="1"/>
</dbReference>
<dbReference type="PIRSF" id="PIRSF005673">
    <property type="entry name" value="Importin_alpha"/>
    <property type="match status" value="1"/>
</dbReference>
<dbReference type="SMART" id="SM00185">
    <property type="entry name" value="ARM"/>
    <property type="match status" value="8"/>
</dbReference>
<dbReference type="SUPFAM" id="SSF48371">
    <property type="entry name" value="ARM repeat"/>
    <property type="match status" value="1"/>
</dbReference>
<dbReference type="PROSITE" id="PS50176">
    <property type="entry name" value="ARM_REPEAT"/>
    <property type="match status" value="3"/>
</dbReference>
<dbReference type="PROSITE" id="PS51214">
    <property type="entry name" value="IBB"/>
    <property type="match status" value="1"/>
</dbReference>
<gene>
    <name type="primary">kpna1</name>
</gene>
<protein>
    <recommendedName>
        <fullName>Importin subunit alpha-5</fullName>
    </recommendedName>
    <alternativeName>
        <fullName>Karyopherin subunit alpha-1</fullName>
    </alternativeName>
</protein>
<proteinExistence type="evidence at protein level"/>
<organism>
    <name type="scientific">Xenopus laevis</name>
    <name type="common">African clawed frog</name>
    <dbReference type="NCBI Taxonomy" id="8355"/>
    <lineage>
        <taxon>Eukaryota</taxon>
        <taxon>Metazoa</taxon>
        <taxon>Chordata</taxon>
        <taxon>Craniata</taxon>
        <taxon>Vertebrata</taxon>
        <taxon>Euteleostomi</taxon>
        <taxon>Amphibia</taxon>
        <taxon>Batrachia</taxon>
        <taxon>Anura</taxon>
        <taxon>Pipoidea</taxon>
        <taxon>Pipidae</taxon>
        <taxon>Xenopodinae</taxon>
        <taxon>Xenopus</taxon>
        <taxon>Xenopus</taxon>
    </lineage>
</organism>
<reference key="1">
    <citation type="journal article" date="1994" name="Cell">
        <title>Isolation of a protein that is essential for the first step of nuclear protein import.</title>
        <authorList>
            <person name="Goerlich D."/>
            <person name="Prehn S."/>
            <person name="Laskey R.A."/>
            <person name="Hartmann E."/>
        </authorList>
    </citation>
    <scope>NUCLEOTIDE SEQUENCE [MRNA]</scope>
    <scope>PROTEIN SEQUENCE OF 2-55; 296-332; 342-346 AND 506-522</scope>
    <source>
        <tissue>Ovary</tissue>
    </source>
</reference>
<reference key="2">
    <citation type="journal article" date="1996" name="EMBO J.">
        <title>A 41 amino acid motif in importin-alpha confers binding to importin-beta and hence transit into the nucleus.</title>
        <authorList>
            <person name="Goerlich D."/>
            <person name="Henklein P."/>
            <person name="Laskey R.A."/>
            <person name="Hartmann E."/>
        </authorList>
    </citation>
    <scope>IDENTIFICATION OF IBB DOMAIN</scope>
</reference>
<accession>P52170</accession>
<sequence>MPTTNEADERMRKFKNKGKDTAELRRRRVEVSVELRKAKKDEQILKRRNVCLPEELILSPEKNAMQSVQVPPLSLEEIVQGMNSGDPENELRCTQAARKMLSRERNPPLNDIIEAGLIPKLVEFLSRHDNSTLQFEAAWALTNIASGTSDQTKSVVDGGAIPAFISLISSPHLHISEQAVWALGNIAGDGPLYRDALINCNVIPPLLALVNPQTPLGYLRNITWMLSNLCRNKNPYPPMSAVLQILPVLTQLMHHDDKDILSDTCWAMSYLTDGSNDRIDVVVKTGIVDRLIQLMYSPELSIVTPSLRTVGNIVTGTDKQTQAAIDAGVLSVLPQLLRHQKPSIQKEAAWAISNIAAGPAPQIQQMITCGLLSPLVDLLNKGDFKAQKEAVWAVTNYTSGGTVEQVVQLVQCGVLEPLLNLLTIKDSKTILVILDAISNIFLAAEKLGEQEKLCLLVEELGGLEKIEALQTHDNHMVYHAALALIEKYFSGEEADDIALEPEMGKDAYTFQVPNMQKESFNF</sequence>
<feature type="initiator methionine" description="Removed" evidence="5">
    <location>
        <position position="1"/>
    </location>
</feature>
<feature type="chain" id="PRO_0000120731" description="Importin subunit alpha-5">
    <location>
        <begin position="2"/>
        <end position="522"/>
    </location>
</feature>
<feature type="domain" description="IBB" evidence="3">
    <location>
        <begin position="2"/>
        <end position="57"/>
    </location>
</feature>
<feature type="repeat" description="ARM 1">
    <location>
        <begin position="109"/>
        <end position="151"/>
    </location>
</feature>
<feature type="repeat" description="ARM 2">
    <location>
        <begin position="152"/>
        <end position="196"/>
    </location>
</feature>
<feature type="repeat" description="ARM 3">
    <location>
        <begin position="197"/>
        <end position="235"/>
    </location>
</feature>
<feature type="repeat" description="ARM 4">
    <location>
        <begin position="236"/>
        <end position="280"/>
    </location>
</feature>
<feature type="repeat" description="ARM 5">
    <location>
        <begin position="281"/>
        <end position="320"/>
    </location>
</feature>
<feature type="repeat" description="ARM 6">
    <location>
        <begin position="321"/>
        <end position="362"/>
    </location>
</feature>
<feature type="repeat" description="ARM 7">
    <location>
        <begin position="363"/>
        <end position="402"/>
    </location>
</feature>
<feature type="repeat" description="ARM 8">
    <location>
        <begin position="403"/>
        <end position="447"/>
    </location>
</feature>
<feature type="region of interest" description="Disordered" evidence="4">
    <location>
        <begin position="1"/>
        <end position="22"/>
    </location>
</feature>
<feature type="region of interest" description="NLS binding site (major)" evidence="1">
    <location>
        <begin position="139"/>
        <end position="231"/>
    </location>
</feature>
<feature type="region of interest" description="NLS binding site (minor)" evidence="1">
    <location>
        <begin position="308"/>
        <end position="396"/>
    </location>
</feature>
<feature type="short sequence motif" description="Nuclear localization signal" evidence="1">
    <location>
        <begin position="42"/>
        <end position="51"/>
    </location>
</feature>
<feature type="compositionally biased region" description="Basic and acidic residues" evidence="4">
    <location>
        <begin position="7"/>
        <end position="22"/>
    </location>
</feature>
<feature type="sequence conflict" description="In Ref. 1; AA sequence." evidence="7" ref="1">
    <original>T</original>
    <variation>P</variation>
    <location>
        <position position="309"/>
    </location>
</feature>
<name>IMA5_XENLA</name>
<comment type="function">
    <text evidence="2">Essential for selective protein import into nucleus. Promotes signal-dependent binding of karyophilic proteins to the nuclear envelope.</text>
</comment>
<comment type="subunit">
    <text evidence="2">Forms a complex with importin subunit beta-1.</text>
</comment>
<comment type="subcellular location">
    <subcellularLocation>
        <location evidence="2">Cytoplasm</location>
    </subcellularLocation>
    <subcellularLocation>
        <location evidence="2">Nucleus</location>
    </subcellularLocation>
</comment>
<comment type="domain">
    <text evidence="6">The importin beta binding domain (IBB domain), which is sufficient for binding importin beta and essential for nuclear protein import confers import only, but not re-export out of the nucleus.</text>
</comment>
<comment type="similarity">
    <text evidence="7">Belongs to the importin alpha family.</text>
</comment>